<protein>
    <recommendedName>
        <fullName>Kappa-casein</fullName>
    </recommendedName>
</protein>
<accession>Q95199</accession>
<feature type="chain" id="PRO_0000144114" description="Kappa-casein">
    <location>
        <begin position="1" status="less than"/>
        <end position="122"/>
    </location>
</feature>
<feature type="region of interest" description="Disordered" evidence="5">
    <location>
        <begin position="43"/>
        <end position="122"/>
    </location>
</feature>
<feature type="compositionally biased region" description="Polar residues" evidence="5">
    <location>
        <begin position="73"/>
        <end position="89"/>
    </location>
</feature>
<feature type="compositionally biased region" description="Polar residues" evidence="5">
    <location>
        <begin position="111"/>
        <end position="122"/>
    </location>
</feature>
<feature type="site" description="Cleavage; by chymosin/rennin" evidence="1">
    <location>
        <begin position="58"/>
        <end position="59"/>
    </location>
</feature>
<feature type="modified residue" description="Phosphothreonine" evidence="2">
    <location>
        <position position="98"/>
    </location>
</feature>
<feature type="modified residue" description="Phosphoserine; alternate" evidence="2">
    <location>
        <position position="102"/>
    </location>
</feature>
<feature type="modified residue" description="Phosphoserine" evidence="3">
    <location>
        <position position="119"/>
    </location>
</feature>
<feature type="glycosylation site" description="O-linked (GalNAc...) threonine" evidence="2">
    <location>
        <position position="74"/>
    </location>
</feature>
<feature type="glycosylation site" description="N-linked (GlcNAc...) asparagine" evidence="4">
    <location>
        <position position="76"/>
    </location>
</feature>
<feature type="glycosylation site" description="O-linked (GalNAc...) threonine" evidence="2">
    <location>
        <position position="84"/>
    </location>
</feature>
<feature type="glycosylation site" description="O-linked (GalNAc...) threonine" evidence="2">
    <location>
        <position position="86"/>
    </location>
</feature>
<feature type="glycosylation site" description="O-linked (GalNAc...) threonine" evidence="2">
    <location>
        <position position="89"/>
    </location>
</feature>
<feature type="glycosylation site" description="O-linked (GalNAc...) threonine" evidence="2">
    <location>
        <position position="95"/>
    </location>
</feature>
<feature type="glycosylation site" description="O-linked (GalNAc...) serine; alternate" evidence="2">
    <location>
        <position position="102"/>
    </location>
</feature>
<feature type="glycosylation site" description="O-linked (GalNAc...) threonine" evidence="2">
    <location>
        <position position="118"/>
    </location>
</feature>
<feature type="non-terminal residue">
    <location>
        <position position="1"/>
    </location>
</feature>
<comment type="function">
    <text>Kappa-casein stabilizes micelle formation, preventing casein precipitation in milk.</text>
</comment>
<comment type="subcellular location">
    <subcellularLocation>
        <location>Secreted</location>
    </subcellularLocation>
</comment>
<comment type="tissue specificity">
    <text>Mammary gland specific. Secreted in milk.</text>
</comment>
<comment type="similarity">
    <text evidence="6">Belongs to the kappa-casein family.</text>
</comment>
<name>CASK_MUNRE</name>
<proteinExistence type="evidence at transcript level"/>
<organism>
    <name type="scientific">Muntiacus reevesi</name>
    <name type="common">Reeves' muntjac</name>
    <name type="synonym">Cervus reevesi</name>
    <dbReference type="NCBI Taxonomy" id="9886"/>
    <lineage>
        <taxon>Eukaryota</taxon>
        <taxon>Metazoa</taxon>
        <taxon>Chordata</taxon>
        <taxon>Craniata</taxon>
        <taxon>Vertebrata</taxon>
        <taxon>Euteleostomi</taxon>
        <taxon>Mammalia</taxon>
        <taxon>Eutheria</taxon>
        <taxon>Laurasiatheria</taxon>
        <taxon>Artiodactyla</taxon>
        <taxon>Ruminantia</taxon>
        <taxon>Pecora</taxon>
        <taxon>Cervidae</taxon>
        <taxon>Muntiacinae</taxon>
        <taxon>Muntiacus</taxon>
    </lineage>
</organism>
<evidence type="ECO:0000250" key="1"/>
<evidence type="ECO:0000250" key="2">
    <source>
        <dbReference type="UniProtKB" id="P02668"/>
    </source>
</evidence>
<evidence type="ECO:0000250" key="3">
    <source>
        <dbReference type="UniProtKB" id="P02670"/>
    </source>
</evidence>
<evidence type="ECO:0000255" key="4"/>
<evidence type="ECO:0000256" key="5">
    <source>
        <dbReference type="SAM" id="MobiDB-lite"/>
    </source>
</evidence>
<evidence type="ECO:0000305" key="6"/>
<sequence length="122" mass="12878">VALISNQFLPYPYYAKPGAVRSPAQILQWQALPNTVPATSCQAQPATVARHPHPRLSFMAIPPKKSQDKTDHPTINTSATVESTATPTTEAVVDTAATQEASPEVIASAPEASTDQVTSTVV</sequence>
<dbReference type="EMBL" id="U37509">
    <property type="protein sequence ID" value="AAC48657.1"/>
    <property type="molecule type" value="Genomic_DNA"/>
</dbReference>
<dbReference type="GlyCosmos" id="Q95199">
    <property type="glycosylation" value="8 sites, No reported glycans"/>
</dbReference>
<dbReference type="GO" id="GO:0005615">
    <property type="term" value="C:extracellular space"/>
    <property type="evidence" value="ECO:0007669"/>
    <property type="project" value="TreeGrafter"/>
</dbReference>
<dbReference type="GO" id="GO:0007595">
    <property type="term" value="P:lactation"/>
    <property type="evidence" value="ECO:0007669"/>
    <property type="project" value="TreeGrafter"/>
</dbReference>
<dbReference type="GO" id="GO:0050821">
    <property type="term" value="P:protein stabilization"/>
    <property type="evidence" value="ECO:0007669"/>
    <property type="project" value="TreeGrafter"/>
</dbReference>
<dbReference type="InterPro" id="IPR000117">
    <property type="entry name" value="Casein_kappa"/>
</dbReference>
<dbReference type="PANTHER" id="PTHR11470">
    <property type="entry name" value="KAPPA CASEIN"/>
    <property type="match status" value="1"/>
</dbReference>
<dbReference type="PANTHER" id="PTHR11470:SF2">
    <property type="entry name" value="KAPPA-CASEIN"/>
    <property type="match status" value="1"/>
</dbReference>
<dbReference type="Pfam" id="PF00997">
    <property type="entry name" value="Casein_kappa"/>
    <property type="match status" value="1"/>
</dbReference>
<reference key="1">
    <citation type="journal article" date="1996" name="Mol. Phylogenet. Evol.">
        <title>K-casein gene phylogeny of higher ruminants (Pecora, Artiodactyla).</title>
        <authorList>
            <person name="Cronin M.A."/>
            <person name="Stuart R."/>
            <person name="Pierson B.J."/>
            <person name="Patton J.C."/>
        </authorList>
    </citation>
    <scope>NUCLEOTIDE SEQUENCE [GENOMIC DNA]</scope>
</reference>
<keyword id="KW-0325">Glycoprotein</keyword>
<keyword id="KW-0494">Milk protein</keyword>
<keyword id="KW-0597">Phosphoprotein</keyword>
<keyword id="KW-0964">Secreted</keyword>
<gene>
    <name type="primary">CSN3</name>
    <name type="synonym">CSN10</name>
    <name type="synonym">CSNK</name>
</gene>